<evidence type="ECO:0000250" key="1">
    <source>
        <dbReference type="UniProtKB" id="P27612"/>
    </source>
</evidence>
<evidence type="ECO:0000250" key="2">
    <source>
        <dbReference type="UniProtKB" id="Q9Y263"/>
    </source>
</evidence>
<evidence type="ECO:0000255" key="3">
    <source>
        <dbReference type="PROSITE-ProRule" id="PRU00727"/>
    </source>
</evidence>
<evidence type="ECO:0000255" key="4">
    <source>
        <dbReference type="PROSITE-ProRule" id="PRU00729"/>
    </source>
</evidence>
<evidence type="ECO:0000305" key="5"/>
<evidence type="ECO:0007744" key="6">
    <source>
    </source>
</evidence>
<organism>
    <name type="scientific">Rattus norvegicus</name>
    <name type="common">Rat</name>
    <dbReference type="NCBI Taxonomy" id="10116"/>
    <lineage>
        <taxon>Eukaryota</taxon>
        <taxon>Metazoa</taxon>
        <taxon>Chordata</taxon>
        <taxon>Craniata</taxon>
        <taxon>Vertebrata</taxon>
        <taxon>Euteleostomi</taxon>
        <taxon>Mammalia</taxon>
        <taxon>Eutheria</taxon>
        <taxon>Euarchontoglires</taxon>
        <taxon>Glires</taxon>
        <taxon>Rodentia</taxon>
        <taxon>Myomorpha</taxon>
        <taxon>Muroidea</taxon>
        <taxon>Muridae</taxon>
        <taxon>Murinae</taxon>
        <taxon>Rattus</taxon>
    </lineage>
</organism>
<dbReference type="EMBL" id="AABR03040245">
    <property type="status" value="NOT_ANNOTATED_CDS"/>
    <property type="molecule type" value="Genomic_DNA"/>
</dbReference>
<dbReference type="EMBL" id="U17901">
    <property type="protein sequence ID" value="AAA79979.1"/>
    <property type="status" value="ALT_SEQ"/>
    <property type="molecule type" value="mRNA"/>
</dbReference>
<dbReference type="PIR" id="JC4239">
    <property type="entry name" value="JC4239"/>
</dbReference>
<dbReference type="RefSeq" id="NP_446318.3">
    <property type="nucleotide sequence ID" value="NM_053866.3"/>
</dbReference>
<dbReference type="SMR" id="P54319"/>
<dbReference type="FunCoup" id="P54319">
    <property type="interactions" value="4887"/>
</dbReference>
<dbReference type="IntAct" id="P54319">
    <property type="interactions" value="1"/>
</dbReference>
<dbReference type="MINT" id="P54319"/>
<dbReference type="STRING" id="10116.ENSRNOP00000010621"/>
<dbReference type="iPTMnet" id="P54319"/>
<dbReference type="PhosphoSitePlus" id="P54319"/>
<dbReference type="jPOST" id="P54319"/>
<dbReference type="PaxDb" id="10116-ENSRNOP00000010621"/>
<dbReference type="Ensembl" id="ENSRNOT00000010621.6">
    <property type="protein sequence ID" value="ENSRNOP00000010621.3"/>
    <property type="gene ID" value="ENSRNOG00000007753.7"/>
</dbReference>
<dbReference type="GeneID" id="116645"/>
<dbReference type="KEGG" id="rno:116645"/>
<dbReference type="UCSC" id="RGD:621245">
    <property type="organism name" value="rat"/>
</dbReference>
<dbReference type="AGR" id="RGD:621245"/>
<dbReference type="CTD" id="9373"/>
<dbReference type="RGD" id="621245">
    <property type="gene designation" value="Plaa"/>
</dbReference>
<dbReference type="eggNOG" id="KOG0301">
    <property type="taxonomic scope" value="Eukaryota"/>
</dbReference>
<dbReference type="GeneTree" id="ENSGT00550000074944"/>
<dbReference type="HOGENOM" id="CLU_011791_2_0_1"/>
<dbReference type="InParanoid" id="P54319"/>
<dbReference type="OMA" id="DKCIYYW"/>
<dbReference type="OrthoDB" id="10265988at2759"/>
<dbReference type="PhylomeDB" id="P54319"/>
<dbReference type="TreeFam" id="TF105944"/>
<dbReference type="PRO" id="PR:P54319"/>
<dbReference type="Proteomes" id="UP000002494">
    <property type="component" value="Chromosome 5"/>
</dbReference>
<dbReference type="Bgee" id="ENSRNOG00000007753">
    <property type="expression patterns" value="Expressed in liver and 19 other cell types or tissues"/>
</dbReference>
<dbReference type="GO" id="GO:0005737">
    <property type="term" value="C:cytoplasm"/>
    <property type="evidence" value="ECO:0000250"/>
    <property type="project" value="UniProtKB"/>
</dbReference>
<dbReference type="GO" id="GO:0070062">
    <property type="term" value="C:extracellular exosome"/>
    <property type="evidence" value="ECO:0000266"/>
    <property type="project" value="RGD"/>
</dbReference>
<dbReference type="GO" id="GO:0005634">
    <property type="term" value="C:nucleus"/>
    <property type="evidence" value="ECO:0000250"/>
    <property type="project" value="UniProtKB"/>
</dbReference>
<dbReference type="GO" id="GO:0045202">
    <property type="term" value="C:synapse"/>
    <property type="evidence" value="ECO:0000250"/>
    <property type="project" value="UniProtKB"/>
</dbReference>
<dbReference type="GO" id="GO:0016005">
    <property type="term" value="F:phospholipase A2 activator activity"/>
    <property type="evidence" value="ECO:0000250"/>
    <property type="project" value="UniProtKB"/>
</dbReference>
<dbReference type="GO" id="GO:0043130">
    <property type="term" value="F:ubiquitin binding"/>
    <property type="evidence" value="ECO:0000318"/>
    <property type="project" value="GO_Central"/>
</dbReference>
<dbReference type="GO" id="GO:0071222">
    <property type="term" value="P:cellular response to lipopolysaccharide"/>
    <property type="evidence" value="ECO:0000250"/>
    <property type="project" value="UniProtKB"/>
</dbReference>
<dbReference type="GO" id="GO:0006954">
    <property type="term" value="P:inflammatory response"/>
    <property type="evidence" value="ECO:0000266"/>
    <property type="project" value="RGD"/>
</dbReference>
<dbReference type="GO" id="GO:0016236">
    <property type="term" value="P:macroautophagy"/>
    <property type="evidence" value="ECO:0000250"/>
    <property type="project" value="UniProtKB"/>
</dbReference>
<dbReference type="GO" id="GO:1900045">
    <property type="term" value="P:negative regulation of protein K63-linked ubiquitination"/>
    <property type="evidence" value="ECO:0000250"/>
    <property type="project" value="UniProtKB"/>
</dbReference>
<dbReference type="GO" id="GO:0007399">
    <property type="term" value="P:nervous system development"/>
    <property type="evidence" value="ECO:0007669"/>
    <property type="project" value="UniProtKB-KW"/>
</dbReference>
<dbReference type="GO" id="GO:1903861">
    <property type="term" value="P:positive regulation of dendrite extension"/>
    <property type="evidence" value="ECO:0000250"/>
    <property type="project" value="UniProtKB"/>
</dbReference>
<dbReference type="GO" id="GO:2001224">
    <property type="term" value="P:positive regulation of neuron migration"/>
    <property type="evidence" value="ECO:0000250"/>
    <property type="project" value="UniProtKB"/>
</dbReference>
<dbReference type="GO" id="GO:0031394">
    <property type="term" value="P:positive regulation of prostaglandin biosynthetic process"/>
    <property type="evidence" value="ECO:0000250"/>
    <property type="project" value="UniProtKB"/>
</dbReference>
<dbReference type="GO" id="GO:1903423">
    <property type="term" value="P:positive regulation of synaptic vesicle recycling"/>
    <property type="evidence" value="ECO:0000250"/>
    <property type="project" value="UniProtKB"/>
</dbReference>
<dbReference type="GO" id="GO:0006693">
    <property type="term" value="P:prostaglandin metabolic process"/>
    <property type="evidence" value="ECO:0000266"/>
    <property type="project" value="RGD"/>
</dbReference>
<dbReference type="GO" id="GO:0043161">
    <property type="term" value="P:proteasome-mediated ubiquitin-dependent protein catabolic process"/>
    <property type="evidence" value="ECO:0000318"/>
    <property type="project" value="GO_Central"/>
</dbReference>
<dbReference type="GO" id="GO:0010992">
    <property type="term" value="P:ubiquitin recycling"/>
    <property type="evidence" value="ECO:0000318"/>
    <property type="project" value="GO_Central"/>
</dbReference>
<dbReference type="GO" id="GO:0043162">
    <property type="term" value="P:ubiquitin-dependent protein catabolic process via the multivesicular body sorting pathway"/>
    <property type="evidence" value="ECO:0000250"/>
    <property type="project" value="UniProtKB"/>
</dbReference>
<dbReference type="CDD" id="cd00200">
    <property type="entry name" value="WD40"/>
    <property type="match status" value="1"/>
</dbReference>
<dbReference type="FunFam" id="2.130.10.10:FF:000175">
    <property type="entry name" value="Phospholipase A-2-activating protein"/>
    <property type="match status" value="1"/>
</dbReference>
<dbReference type="FunFam" id="1.25.10.10:FF:000163">
    <property type="entry name" value="Phospholipase A-2-activating protein, putative"/>
    <property type="match status" value="1"/>
</dbReference>
<dbReference type="FunFam" id="3.10.20.870:FF:000001">
    <property type="entry name" value="Phospholipase A-2-activating protein-like"/>
    <property type="match status" value="1"/>
</dbReference>
<dbReference type="Gene3D" id="1.25.10.10">
    <property type="entry name" value="Leucine-rich Repeat Variant"/>
    <property type="match status" value="1"/>
</dbReference>
<dbReference type="Gene3D" id="3.10.20.870">
    <property type="entry name" value="PFU (PLAA family ubiquitin binding), C-terminal domain"/>
    <property type="match status" value="1"/>
</dbReference>
<dbReference type="Gene3D" id="2.130.10.10">
    <property type="entry name" value="YVTN repeat-like/Quinoprotein amine dehydrogenase"/>
    <property type="match status" value="1"/>
</dbReference>
<dbReference type="InterPro" id="IPR011989">
    <property type="entry name" value="ARM-like"/>
</dbReference>
<dbReference type="InterPro" id="IPR015155">
    <property type="entry name" value="PFU"/>
</dbReference>
<dbReference type="InterPro" id="IPR038122">
    <property type="entry name" value="PFU_sf"/>
</dbReference>
<dbReference type="InterPro" id="IPR013535">
    <property type="entry name" value="PUL_dom"/>
</dbReference>
<dbReference type="InterPro" id="IPR015943">
    <property type="entry name" value="WD40/YVTN_repeat-like_dom_sf"/>
</dbReference>
<dbReference type="InterPro" id="IPR036322">
    <property type="entry name" value="WD40_repeat_dom_sf"/>
</dbReference>
<dbReference type="InterPro" id="IPR001680">
    <property type="entry name" value="WD40_rpt"/>
</dbReference>
<dbReference type="PANTHER" id="PTHR19849">
    <property type="entry name" value="PHOSPHOLIPASE A-2-ACTIVATING PROTEIN"/>
    <property type="match status" value="1"/>
</dbReference>
<dbReference type="PANTHER" id="PTHR19849:SF0">
    <property type="entry name" value="PHOSPHOLIPASE A-2-ACTIVATING PROTEIN"/>
    <property type="match status" value="1"/>
</dbReference>
<dbReference type="Pfam" id="PF09070">
    <property type="entry name" value="PFU"/>
    <property type="match status" value="1"/>
</dbReference>
<dbReference type="Pfam" id="PF08324">
    <property type="entry name" value="PUL"/>
    <property type="match status" value="1"/>
</dbReference>
<dbReference type="Pfam" id="PF00400">
    <property type="entry name" value="WD40"/>
    <property type="match status" value="7"/>
</dbReference>
<dbReference type="SMART" id="SM00320">
    <property type="entry name" value="WD40"/>
    <property type="match status" value="7"/>
</dbReference>
<dbReference type="SUPFAM" id="SSF50978">
    <property type="entry name" value="WD40 repeat-like"/>
    <property type="match status" value="1"/>
</dbReference>
<dbReference type="PROSITE" id="PS51394">
    <property type="entry name" value="PFU"/>
    <property type="match status" value="1"/>
</dbReference>
<dbReference type="PROSITE" id="PS51396">
    <property type="entry name" value="PUL"/>
    <property type="match status" value="1"/>
</dbReference>
<dbReference type="PROSITE" id="PS50082">
    <property type="entry name" value="WD_REPEATS_2"/>
    <property type="match status" value="3"/>
</dbReference>
<dbReference type="PROSITE" id="PS50294">
    <property type="entry name" value="WD_REPEATS_REGION"/>
    <property type="match status" value="1"/>
</dbReference>
<reference key="1">
    <citation type="journal article" date="2004" name="Nature">
        <title>Genome sequence of the Brown Norway rat yields insights into mammalian evolution.</title>
        <authorList>
            <person name="Gibbs R.A."/>
            <person name="Weinstock G.M."/>
            <person name="Metzker M.L."/>
            <person name="Muzny D.M."/>
            <person name="Sodergren E.J."/>
            <person name="Scherer S."/>
            <person name="Scott G."/>
            <person name="Steffen D."/>
            <person name="Worley K.C."/>
            <person name="Burch P.E."/>
            <person name="Okwuonu G."/>
            <person name="Hines S."/>
            <person name="Lewis L."/>
            <person name="Deramo C."/>
            <person name="Delgado O."/>
            <person name="Dugan-Rocha S."/>
            <person name="Miner G."/>
            <person name="Morgan M."/>
            <person name="Hawes A."/>
            <person name="Gill R."/>
            <person name="Holt R.A."/>
            <person name="Adams M.D."/>
            <person name="Amanatides P.G."/>
            <person name="Baden-Tillson H."/>
            <person name="Barnstead M."/>
            <person name="Chin S."/>
            <person name="Evans C.A."/>
            <person name="Ferriera S."/>
            <person name="Fosler C."/>
            <person name="Glodek A."/>
            <person name="Gu Z."/>
            <person name="Jennings D."/>
            <person name="Kraft C.L."/>
            <person name="Nguyen T."/>
            <person name="Pfannkoch C.M."/>
            <person name="Sitter C."/>
            <person name="Sutton G.G."/>
            <person name="Venter J.C."/>
            <person name="Woodage T."/>
            <person name="Smith D."/>
            <person name="Lee H.-M."/>
            <person name="Gustafson E."/>
            <person name="Cahill P."/>
            <person name="Kana A."/>
            <person name="Doucette-Stamm L."/>
            <person name="Weinstock K."/>
            <person name="Fechtel K."/>
            <person name="Weiss R.B."/>
            <person name="Dunn D.M."/>
            <person name="Green E.D."/>
            <person name="Blakesley R.W."/>
            <person name="Bouffard G.G."/>
            <person name="De Jong P.J."/>
            <person name="Osoegawa K."/>
            <person name="Zhu B."/>
            <person name="Marra M."/>
            <person name="Schein J."/>
            <person name="Bosdet I."/>
            <person name="Fjell C."/>
            <person name="Jones S."/>
            <person name="Krzywinski M."/>
            <person name="Mathewson C."/>
            <person name="Siddiqui A."/>
            <person name="Wye N."/>
            <person name="McPherson J."/>
            <person name="Zhao S."/>
            <person name="Fraser C.M."/>
            <person name="Shetty J."/>
            <person name="Shatsman S."/>
            <person name="Geer K."/>
            <person name="Chen Y."/>
            <person name="Abramzon S."/>
            <person name="Nierman W.C."/>
            <person name="Havlak P.H."/>
            <person name="Chen R."/>
            <person name="Durbin K.J."/>
            <person name="Egan A."/>
            <person name="Ren Y."/>
            <person name="Song X.-Z."/>
            <person name="Li B."/>
            <person name="Liu Y."/>
            <person name="Qin X."/>
            <person name="Cawley S."/>
            <person name="Cooney A.J."/>
            <person name="D'Souza L.M."/>
            <person name="Martin K."/>
            <person name="Wu J.Q."/>
            <person name="Gonzalez-Garay M.L."/>
            <person name="Jackson A.R."/>
            <person name="Kalafus K.J."/>
            <person name="McLeod M.P."/>
            <person name="Milosavljevic A."/>
            <person name="Virk D."/>
            <person name="Volkov A."/>
            <person name="Wheeler D.A."/>
            <person name="Zhang Z."/>
            <person name="Bailey J.A."/>
            <person name="Eichler E.E."/>
            <person name="Tuzun E."/>
            <person name="Birney E."/>
            <person name="Mongin E."/>
            <person name="Ureta-Vidal A."/>
            <person name="Woodwark C."/>
            <person name="Zdobnov E."/>
            <person name="Bork P."/>
            <person name="Suyama M."/>
            <person name="Torrents D."/>
            <person name="Alexandersson M."/>
            <person name="Trask B.J."/>
            <person name="Young J.M."/>
            <person name="Huang H."/>
            <person name="Wang H."/>
            <person name="Xing H."/>
            <person name="Daniels S."/>
            <person name="Gietzen D."/>
            <person name="Schmidt J."/>
            <person name="Stevens K."/>
            <person name="Vitt U."/>
            <person name="Wingrove J."/>
            <person name="Camara F."/>
            <person name="Mar Alba M."/>
            <person name="Abril J.F."/>
            <person name="Guigo R."/>
            <person name="Smit A."/>
            <person name="Dubchak I."/>
            <person name="Rubin E.M."/>
            <person name="Couronne O."/>
            <person name="Poliakov A."/>
            <person name="Huebner N."/>
            <person name="Ganten D."/>
            <person name="Goesele C."/>
            <person name="Hummel O."/>
            <person name="Kreitler T."/>
            <person name="Lee Y.-A."/>
            <person name="Monti J."/>
            <person name="Schulz H."/>
            <person name="Zimdahl H."/>
            <person name="Himmelbauer H."/>
            <person name="Lehrach H."/>
            <person name="Jacob H.J."/>
            <person name="Bromberg S."/>
            <person name="Gullings-Handley J."/>
            <person name="Jensen-Seaman M.I."/>
            <person name="Kwitek A.E."/>
            <person name="Lazar J."/>
            <person name="Pasko D."/>
            <person name="Tonellato P.J."/>
            <person name="Twigger S."/>
            <person name="Ponting C.P."/>
            <person name="Duarte J.M."/>
            <person name="Rice S."/>
            <person name="Goodstadt L."/>
            <person name="Beatson S.A."/>
            <person name="Emes R.D."/>
            <person name="Winter E.E."/>
            <person name="Webber C."/>
            <person name="Brandt P."/>
            <person name="Nyakatura G."/>
            <person name="Adetobi M."/>
            <person name="Chiaromonte F."/>
            <person name="Elnitski L."/>
            <person name="Eswara P."/>
            <person name="Hardison R.C."/>
            <person name="Hou M."/>
            <person name="Kolbe D."/>
            <person name="Makova K."/>
            <person name="Miller W."/>
            <person name="Nekrutenko A."/>
            <person name="Riemer C."/>
            <person name="Schwartz S."/>
            <person name="Taylor J."/>
            <person name="Yang S."/>
            <person name="Zhang Y."/>
            <person name="Lindpaintner K."/>
            <person name="Andrews T.D."/>
            <person name="Caccamo M."/>
            <person name="Clamp M."/>
            <person name="Clarke L."/>
            <person name="Curwen V."/>
            <person name="Durbin R.M."/>
            <person name="Eyras E."/>
            <person name="Searle S.M."/>
            <person name="Cooper G.M."/>
            <person name="Batzoglou S."/>
            <person name="Brudno M."/>
            <person name="Sidow A."/>
            <person name="Stone E.A."/>
            <person name="Payseur B.A."/>
            <person name="Bourque G."/>
            <person name="Lopez-Otin C."/>
            <person name="Puente X.S."/>
            <person name="Chakrabarti K."/>
            <person name="Chatterji S."/>
            <person name="Dewey C."/>
            <person name="Pachter L."/>
            <person name="Bray N."/>
            <person name="Yap V.B."/>
            <person name="Caspi A."/>
            <person name="Tesler G."/>
            <person name="Pevzner P.A."/>
            <person name="Haussler D."/>
            <person name="Roskin K.M."/>
            <person name="Baertsch R."/>
            <person name="Clawson H."/>
            <person name="Furey T.S."/>
            <person name="Hinrichs A.S."/>
            <person name="Karolchik D."/>
            <person name="Kent W.J."/>
            <person name="Rosenbloom K.R."/>
            <person name="Trumbower H."/>
            <person name="Weirauch M."/>
            <person name="Cooper D.N."/>
            <person name="Stenson P.D."/>
            <person name="Ma B."/>
            <person name="Brent M."/>
            <person name="Arumugam M."/>
            <person name="Shteynberg D."/>
            <person name="Copley R.R."/>
            <person name="Taylor M.S."/>
            <person name="Riethman H."/>
            <person name="Mudunuri U."/>
            <person name="Peterson J."/>
            <person name="Guyer M."/>
            <person name="Felsenfeld A."/>
            <person name="Old S."/>
            <person name="Mockrin S."/>
            <person name="Collins F.S."/>
        </authorList>
    </citation>
    <scope>NUCLEOTIDE SEQUENCE [LARGE SCALE GENOMIC DNA]</scope>
    <source>
        <strain>Brown Norway</strain>
    </source>
</reference>
<reference key="2">
    <citation type="journal article" date="1995" name="Gene">
        <title>Cloning of a rat cDNA encoding a protein with high homology to mouse phospholipase A2-activating protein.</title>
        <authorList>
            <person name="Wang H."/>
            <person name="Lemasters J.J."/>
            <person name="Herman B."/>
        </authorList>
    </citation>
    <scope>NUCLEOTIDE SEQUENCE [MRNA] OF 11-795</scope>
    <source>
        <strain>Sprague-Dawley</strain>
        <tissue>Liver</tissue>
    </source>
</reference>
<reference key="3">
    <citation type="journal article" date="2012" name="Nat. Commun.">
        <title>Quantitative maps of protein phosphorylation sites across 14 different rat organs and tissues.</title>
        <authorList>
            <person name="Lundby A."/>
            <person name="Secher A."/>
            <person name="Lage K."/>
            <person name="Nordsborg N.B."/>
            <person name="Dmytriyev A."/>
            <person name="Lundby C."/>
            <person name="Olsen J.V."/>
        </authorList>
    </citation>
    <scope>PHOSPHORYLATION [LARGE SCALE ANALYSIS] AT SER-50</scope>
    <scope>IDENTIFICATION BY MASS SPECTROMETRY [LARGE SCALE ANALYSIS]</scope>
</reference>
<name>PLAP_RAT</name>
<gene>
    <name type="primary">Plaa</name>
    <name type="synonym">Plap</name>
</gene>
<keyword id="KW-0007">Acetylation</keyword>
<keyword id="KW-0963">Cytoplasm</keyword>
<keyword id="KW-0217">Developmental protein</keyword>
<keyword id="KW-0524">Neurogenesis</keyword>
<keyword id="KW-0539">Nucleus</keyword>
<keyword id="KW-0597">Phosphoprotein</keyword>
<keyword id="KW-1185">Reference proteome</keyword>
<keyword id="KW-0677">Repeat</keyword>
<keyword id="KW-0770">Synapse</keyword>
<keyword id="KW-0853">WD repeat</keyword>
<accession>P54319</accession>
<protein>
    <recommendedName>
        <fullName>Phospholipase A-2-activating protein</fullName>
        <shortName>PLA2P</shortName>
        <shortName>PLAP</shortName>
    </recommendedName>
</protein>
<sequence>MASGAARYRLSCSLPGHELDVRGLVCCLYPPGAFVSVSRDRTTRLWAPDSPNRGFTEMHCMSGHSNFVSCVCIIPSSDIYPHGLIATGGNDHNICIFSLDSPMPLYILKGHKDTVCSLSSGKFGTLLSGSWDTTAKVWLNDKCMMTLQGHTAAVWAVKILPEQGLMLTGSADKTIKLWKAGRCERTFSGHEDCVRGLAILSETEFLSCANDASIRRWQITGECLGVYYGHTNYIYSISVFPNCRDFVTTAEDRSLRIWKHGECAQTIRLPAQSIWCCCVLDNGDIVVGASDGIIRVFTEADERTASAEEIKAFERELSQATIDSKTGDLGDINAEQLPGREHLNEPGTREGQTRLIRDGERVEAYQWSVSDGRWIKIGDVVGSSGANQQTSGKVLYEGKEFDYVFSIDVNEGGPSYKLPYNVSDDPWLVAYNFLQKNDLNPMFLDQVAKFIIDNTKGQTLGLGNTSFSDPFTGGGRYVPGTSGPSNTVQTADPFTGAGRYMPGSAGMDTTMAGVDPFTGNSAYRSAASKTVNIYFPKKEALTFDQANPTQILGKLKELNGSAPEEKKLTEDDLVLLEKILSLICGNASEKPTAQQLQVLWKAINWPEDIVFPALDILRLSIKHPSVNENFCNEKEGDQFSSHLINLLNPKGKPANQLLALRTFCNCFVSQAGQKLMMSQRESLMSHAIELKSGSNKNIHIALATLTLNYSVCFHKDHNIEGKAQCLSVISTILEVVQDLEATFRLLVALGTLISDDSNAIQLAKSLGVDSQIKKYASVSEPAKVSECCRLILNLL</sequence>
<comment type="function">
    <text evidence="1 2">Plays a role in protein ubiquitination, sorting and degradation through its association with VCP (By similarity). Involved in ubiquitin-mediated membrane proteins trafficking to late endosomes in an ESCRT-dependent manner, and hence plays a role in synaptic vesicle recycling (By similarity). May play a role in macroautophagy, regulating for instance the clearance of damaged lysosomes (By similarity). Plays a role in cerebellar Purkinje cell development. Positively regulates cytosolic and calcium-independent phospholipase A2 activities in a tumor necrosis factor alpha (TNF-alpha)- or lipopolysaccharide (LPS)-dependent manner, and hence prostaglandin E2 biosynthesis (By similarity).</text>
</comment>
<comment type="subunit">
    <text evidence="2">Interacts with ubiquitin. Interacts with UBXN6, VCP and YOD1; may form a complex involved in macroautophagy.</text>
</comment>
<comment type="subcellular location">
    <subcellularLocation>
        <location evidence="1">Nucleus</location>
    </subcellularLocation>
    <subcellularLocation>
        <location evidence="1">Cytoplasm</location>
    </subcellularLocation>
    <subcellularLocation>
        <location evidence="1">Synapse</location>
    </subcellularLocation>
    <text evidence="2">Recruited to damaged lysosomes decorated with K48-linked ubiquitin chains.</text>
</comment>
<comment type="domain">
    <text evidence="2">The PUL domain is composed of 6 armadillo-like repeats and mediates the interaction with VCP C-terminus.</text>
</comment>
<comment type="domain">
    <text evidence="2">The PFU domain mediates interaction with ubiquitin.</text>
</comment>
<comment type="similarity">
    <text evidence="5">Belongs to the WD repeat PLAP family.</text>
</comment>
<comment type="sequence caution" evidence="5">
    <conflict type="frameshift">
        <sequence resource="EMBL-CDS" id="AAA79979"/>
    </conflict>
</comment>
<feature type="chain" id="PRO_0000051132" description="Phospholipase A-2-activating protein">
    <location>
        <begin position="1"/>
        <end position="795"/>
    </location>
</feature>
<feature type="repeat" description="WD 1">
    <location>
        <begin position="17"/>
        <end position="56"/>
    </location>
</feature>
<feature type="repeat" description="WD 2">
    <location>
        <begin position="63"/>
        <end position="107"/>
    </location>
</feature>
<feature type="repeat" description="WD 3">
    <location>
        <begin position="110"/>
        <end position="148"/>
    </location>
</feature>
<feature type="repeat" description="WD 4">
    <location>
        <begin position="149"/>
        <end position="188"/>
    </location>
</feature>
<feature type="repeat" description="WD 5">
    <location>
        <begin position="190"/>
        <end position="227"/>
    </location>
</feature>
<feature type="repeat" description="WD 6">
    <location>
        <begin position="229"/>
        <end position="268"/>
    </location>
</feature>
<feature type="repeat" description="WD 7">
    <location>
        <begin position="270"/>
        <end position="307"/>
    </location>
</feature>
<feature type="domain" description="PFU" evidence="3">
    <location>
        <begin position="366"/>
        <end position="465"/>
    </location>
</feature>
<feature type="domain" description="PUL" evidence="4">
    <location>
        <begin position="533"/>
        <end position="794"/>
    </location>
</feature>
<feature type="repeat" description="ARM 1">
    <location>
        <begin position="546"/>
        <end position="588"/>
    </location>
</feature>
<feature type="repeat" description="ARM 2">
    <location>
        <begin position="589"/>
        <end position="620"/>
    </location>
</feature>
<feature type="repeat" description="ARM 3">
    <location>
        <begin position="621"/>
        <end position="669"/>
    </location>
</feature>
<feature type="repeat" description="ARM 4">
    <location>
        <begin position="670"/>
        <end position="715"/>
    </location>
</feature>
<feature type="repeat" description="ARM 5">
    <location>
        <begin position="716"/>
        <end position="755"/>
    </location>
</feature>
<feature type="repeat" description="ARM 6">
    <location>
        <begin position="756"/>
        <end position="795"/>
    </location>
</feature>
<feature type="modified residue" description="Phosphoserine" evidence="6">
    <location>
        <position position="50"/>
    </location>
</feature>
<feature type="modified residue" description="N6-acetyllysine" evidence="2">
    <location>
        <position position="529"/>
    </location>
</feature>
<feature type="sequence conflict" description="In Ref. 2." evidence="5" ref="2">
    <original>S</original>
    <variation>F</variation>
    <location>
        <position position="528"/>
    </location>
</feature>
<feature type="sequence conflict" description="In Ref. 2." evidence="5" ref="2">
    <original>I</original>
    <variation>V</variation>
    <location>
        <position position="791"/>
    </location>
</feature>
<proteinExistence type="evidence at protein level"/>